<proteinExistence type="inferred from homology"/>
<sequence length="481" mass="51677">MVASPIHSRGLDLPLPSTMGEFGLSLPRSPLFGTDGIRGKAGELLTAPLALSLGFWAGQVLREQTDTAGPVIIGQDSRLSSDMLANAMAAGLNSAGVEVWQLGLCPTPCVAYLTRKTAAIGGIMISASHNPPEDNGIKFFDHQGLKLPKSLATAIEAGLRGQNQTSGLNASQWGRSYGQPHRVQYYQDFLLGSLPQPLNFQGLKVVLDLAWGASVNLAPHIFRSLGAEVIALHDLADGSQINVDCGSTHLHRLQRAVRETGADLGFAFDGDADRVMAVDAQGRPVDGDYILFLWGKTLQESNHLPDNLIVGTVMANLAFERAWEKLGGKLIRTAVGDQNVQAQMWETGAMLGGEQSGHIICHHHSYSGDGLQAALHLATLVQKSGLSLSELLSESFQPYPQILRNVRVLDRERRLHWQECAPLQQAIATAEKSMGTTGRILVRASGTEPLIRVMVEAACAETAAHWSDQLTSTVQCHLGDS</sequence>
<feature type="chain" id="PRO_0000147988" description="Phosphoglucosamine mutase">
    <location>
        <begin position="1"/>
        <end position="481"/>
    </location>
</feature>
<feature type="active site" description="Phosphoserine intermediate" evidence="1">
    <location>
        <position position="128"/>
    </location>
</feature>
<feature type="binding site" description="via phosphate group" evidence="1">
    <location>
        <position position="128"/>
    </location>
    <ligand>
        <name>Mg(2+)</name>
        <dbReference type="ChEBI" id="CHEBI:18420"/>
    </ligand>
</feature>
<feature type="binding site" evidence="1">
    <location>
        <position position="269"/>
    </location>
    <ligand>
        <name>Mg(2+)</name>
        <dbReference type="ChEBI" id="CHEBI:18420"/>
    </ligand>
</feature>
<feature type="binding site" evidence="1">
    <location>
        <position position="271"/>
    </location>
    <ligand>
        <name>Mg(2+)</name>
        <dbReference type="ChEBI" id="CHEBI:18420"/>
    </ligand>
</feature>
<feature type="binding site" evidence="1">
    <location>
        <position position="273"/>
    </location>
    <ligand>
        <name>Mg(2+)</name>
        <dbReference type="ChEBI" id="CHEBI:18420"/>
    </ligand>
</feature>
<feature type="modified residue" description="Phosphoserine" evidence="1">
    <location>
        <position position="128"/>
    </location>
</feature>
<accession>P73648</accession>
<reference key="1">
    <citation type="journal article" date="1996" name="DNA Res.">
        <title>Sequence analysis of the genome of the unicellular cyanobacterium Synechocystis sp. strain PCC6803. II. Sequence determination of the entire genome and assignment of potential protein-coding regions.</title>
        <authorList>
            <person name="Kaneko T."/>
            <person name="Sato S."/>
            <person name="Kotani H."/>
            <person name="Tanaka A."/>
            <person name="Asamizu E."/>
            <person name="Nakamura Y."/>
            <person name="Miyajima N."/>
            <person name="Hirosawa M."/>
            <person name="Sugiura M."/>
            <person name="Sasamoto S."/>
            <person name="Kimura T."/>
            <person name="Hosouchi T."/>
            <person name="Matsuno A."/>
            <person name="Muraki A."/>
            <person name="Nakazaki N."/>
            <person name="Naruo K."/>
            <person name="Okumura S."/>
            <person name="Shimpo S."/>
            <person name="Takeuchi C."/>
            <person name="Wada T."/>
            <person name="Watanabe A."/>
            <person name="Yamada M."/>
            <person name="Yasuda M."/>
            <person name="Tabata S."/>
        </authorList>
    </citation>
    <scope>NUCLEOTIDE SEQUENCE [LARGE SCALE GENOMIC DNA]</scope>
    <source>
        <strain>ATCC 27184 / PCC 6803 / Kazusa</strain>
    </source>
</reference>
<name>GLMM_SYNY3</name>
<protein>
    <recommendedName>
        <fullName evidence="1">Phosphoglucosamine mutase</fullName>
        <ecNumber evidence="1">5.4.2.10</ecNumber>
    </recommendedName>
</protein>
<dbReference type="EC" id="5.4.2.10" evidence="1"/>
<dbReference type="EMBL" id="BA000022">
    <property type="protein sequence ID" value="BAA17693.1"/>
    <property type="molecule type" value="Genomic_DNA"/>
</dbReference>
<dbReference type="PIR" id="S77135">
    <property type="entry name" value="S77135"/>
</dbReference>
<dbReference type="SMR" id="P73648"/>
<dbReference type="FunCoup" id="P73648">
    <property type="interactions" value="473"/>
</dbReference>
<dbReference type="STRING" id="1148.gene:10498560"/>
<dbReference type="PaxDb" id="1148-1652774"/>
<dbReference type="EnsemblBacteria" id="BAA17693">
    <property type="protein sequence ID" value="BAA17693"/>
    <property type="gene ID" value="BAA17693"/>
</dbReference>
<dbReference type="KEGG" id="syn:sll1758"/>
<dbReference type="eggNOG" id="COG1109">
    <property type="taxonomic scope" value="Bacteria"/>
</dbReference>
<dbReference type="InParanoid" id="P73648"/>
<dbReference type="PhylomeDB" id="P73648"/>
<dbReference type="Proteomes" id="UP000001425">
    <property type="component" value="Chromosome"/>
</dbReference>
<dbReference type="GO" id="GO:0005829">
    <property type="term" value="C:cytosol"/>
    <property type="evidence" value="ECO:0000318"/>
    <property type="project" value="GO_Central"/>
</dbReference>
<dbReference type="GO" id="GO:0000287">
    <property type="term" value="F:magnesium ion binding"/>
    <property type="evidence" value="ECO:0007669"/>
    <property type="project" value="UniProtKB-UniRule"/>
</dbReference>
<dbReference type="GO" id="GO:0008966">
    <property type="term" value="F:phosphoglucosamine mutase activity"/>
    <property type="evidence" value="ECO:0000318"/>
    <property type="project" value="GO_Central"/>
</dbReference>
<dbReference type="GO" id="GO:0004615">
    <property type="term" value="F:phosphomannomutase activity"/>
    <property type="evidence" value="ECO:0000318"/>
    <property type="project" value="GO_Central"/>
</dbReference>
<dbReference type="GO" id="GO:0005975">
    <property type="term" value="P:carbohydrate metabolic process"/>
    <property type="evidence" value="ECO:0007669"/>
    <property type="project" value="InterPro"/>
</dbReference>
<dbReference type="GO" id="GO:0009252">
    <property type="term" value="P:peptidoglycan biosynthetic process"/>
    <property type="evidence" value="ECO:0000318"/>
    <property type="project" value="GO_Central"/>
</dbReference>
<dbReference type="GO" id="GO:0006048">
    <property type="term" value="P:UDP-N-acetylglucosamine biosynthetic process"/>
    <property type="evidence" value="ECO:0000318"/>
    <property type="project" value="GO_Central"/>
</dbReference>
<dbReference type="CDD" id="cd05802">
    <property type="entry name" value="GlmM"/>
    <property type="match status" value="1"/>
</dbReference>
<dbReference type="FunFam" id="3.30.310.50:FF:000001">
    <property type="entry name" value="Phosphoglucosamine mutase"/>
    <property type="match status" value="1"/>
</dbReference>
<dbReference type="FunFam" id="3.40.120.10:FF:000001">
    <property type="entry name" value="Phosphoglucosamine mutase"/>
    <property type="match status" value="1"/>
</dbReference>
<dbReference type="FunFam" id="3.40.120.10:FF:000003">
    <property type="entry name" value="Phosphoglucosamine mutase"/>
    <property type="match status" value="1"/>
</dbReference>
<dbReference type="Gene3D" id="3.40.120.10">
    <property type="entry name" value="Alpha-D-Glucose-1,6-Bisphosphate, subunit A, domain 3"/>
    <property type="match status" value="3"/>
</dbReference>
<dbReference type="Gene3D" id="3.30.310.50">
    <property type="entry name" value="Alpha-D-phosphohexomutase, C-terminal domain"/>
    <property type="match status" value="1"/>
</dbReference>
<dbReference type="HAMAP" id="MF_01554_B">
    <property type="entry name" value="GlmM_B"/>
    <property type="match status" value="1"/>
</dbReference>
<dbReference type="InterPro" id="IPR005844">
    <property type="entry name" value="A-D-PHexomutase_a/b/a-I"/>
</dbReference>
<dbReference type="InterPro" id="IPR016055">
    <property type="entry name" value="A-D-PHexomutase_a/b/a-I/II/III"/>
</dbReference>
<dbReference type="InterPro" id="IPR005845">
    <property type="entry name" value="A-D-PHexomutase_a/b/a-II"/>
</dbReference>
<dbReference type="InterPro" id="IPR005846">
    <property type="entry name" value="A-D-PHexomutase_a/b/a-III"/>
</dbReference>
<dbReference type="InterPro" id="IPR005843">
    <property type="entry name" value="A-D-PHexomutase_C"/>
</dbReference>
<dbReference type="InterPro" id="IPR036900">
    <property type="entry name" value="A-D-PHexomutase_C_sf"/>
</dbReference>
<dbReference type="InterPro" id="IPR016066">
    <property type="entry name" value="A-D-PHexomutase_CS"/>
</dbReference>
<dbReference type="InterPro" id="IPR005841">
    <property type="entry name" value="Alpha-D-phosphohexomutase_SF"/>
</dbReference>
<dbReference type="InterPro" id="IPR006352">
    <property type="entry name" value="GlmM_bact"/>
</dbReference>
<dbReference type="InterPro" id="IPR050060">
    <property type="entry name" value="Phosphoglucosamine_mutase"/>
</dbReference>
<dbReference type="NCBIfam" id="TIGR01455">
    <property type="entry name" value="glmM"/>
    <property type="match status" value="1"/>
</dbReference>
<dbReference type="PANTHER" id="PTHR42946:SF1">
    <property type="entry name" value="PHOSPHOGLUCOMUTASE (ALPHA-D-GLUCOSE-1,6-BISPHOSPHATE-DEPENDENT)"/>
    <property type="match status" value="1"/>
</dbReference>
<dbReference type="PANTHER" id="PTHR42946">
    <property type="entry name" value="PHOSPHOHEXOSE MUTASE"/>
    <property type="match status" value="1"/>
</dbReference>
<dbReference type="Pfam" id="PF02878">
    <property type="entry name" value="PGM_PMM_I"/>
    <property type="match status" value="1"/>
</dbReference>
<dbReference type="Pfam" id="PF02879">
    <property type="entry name" value="PGM_PMM_II"/>
    <property type="match status" value="1"/>
</dbReference>
<dbReference type="Pfam" id="PF02880">
    <property type="entry name" value="PGM_PMM_III"/>
    <property type="match status" value="1"/>
</dbReference>
<dbReference type="Pfam" id="PF00408">
    <property type="entry name" value="PGM_PMM_IV"/>
    <property type="match status" value="1"/>
</dbReference>
<dbReference type="PRINTS" id="PR00509">
    <property type="entry name" value="PGMPMM"/>
</dbReference>
<dbReference type="SUPFAM" id="SSF55957">
    <property type="entry name" value="Phosphoglucomutase, C-terminal domain"/>
    <property type="match status" value="1"/>
</dbReference>
<dbReference type="SUPFAM" id="SSF53738">
    <property type="entry name" value="Phosphoglucomutase, first 3 domains"/>
    <property type="match status" value="3"/>
</dbReference>
<dbReference type="PROSITE" id="PS00710">
    <property type="entry name" value="PGM_PMM"/>
    <property type="match status" value="1"/>
</dbReference>
<comment type="function">
    <text evidence="1">Catalyzes the conversion of glucosamine-6-phosphate to glucosamine-1-phosphate.</text>
</comment>
<comment type="catalytic activity">
    <reaction evidence="1">
        <text>alpha-D-glucosamine 1-phosphate = D-glucosamine 6-phosphate</text>
        <dbReference type="Rhea" id="RHEA:23424"/>
        <dbReference type="ChEBI" id="CHEBI:58516"/>
        <dbReference type="ChEBI" id="CHEBI:58725"/>
        <dbReference type="EC" id="5.4.2.10"/>
    </reaction>
</comment>
<comment type="cofactor">
    <cofactor evidence="1">
        <name>Mg(2+)</name>
        <dbReference type="ChEBI" id="CHEBI:18420"/>
    </cofactor>
    <text evidence="1">Binds 1 Mg(2+) ion per subunit.</text>
</comment>
<comment type="PTM">
    <text evidence="1">Activated by phosphorylation.</text>
</comment>
<comment type="similarity">
    <text evidence="1">Belongs to the phosphohexose mutase family.</text>
</comment>
<evidence type="ECO:0000255" key="1">
    <source>
        <dbReference type="HAMAP-Rule" id="MF_01554"/>
    </source>
</evidence>
<keyword id="KW-0413">Isomerase</keyword>
<keyword id="KW-0460">Magnesium</keyword>
<keyword id="KW-0479">Metal-binding</keyword>
<keyword id="KW-0597">Phosphoprotein</keyword>
<keyword id="KW-1185">Reference proteome</keyword>
<gene>
    <name evidence="1" type="primary">glmM</name>
    <name type="ordered locus">sll1758</name>
</gene>
<organism>
    <name type="scientific">Synechocystis sp. (strain ATCC 27184 / PCC 6803 / Kazusa)</name>
    <dbReference type="NCBI Taxonomy" id="1111708"/>
    <lineage>
        <taxon>Bacteria</taxon>
        <taxon>Bacillati</taxon>
        <taxon>Cyanobacteriota</taxon>
        <taxon>Cyanophyceae</taxon>
        <taxon>Synechococcales</taxon>
        <taxon>Merismopediaceae</taxon>
        <taxon>Synechocystis</taxon>
    </lineage>
</organism>